<sequence>MADIQTERAYQKQPTIFQNKKRVLLGETGKEKLPRYYKNIGLGFKTPKEAIEGTYIDKKCPFTGNVSIRGRILSGVVTKMKMQRTIVIRRDYLHYIRKYNRFEKRHKNMSVHLSPCFRDVQIGDIVTVGECRPLSKTVRFNVLKVTKAAGTKKQFQKF</sequence>
<accession>Q3T0V4</accession>
<accession>Q56JW5</accession>
<organism>
    <name type="scientific">Bos taurus</name>
    <name type="common">Bovine</name>
    <dbReference type="NCBI Taxonomy" id="9913"/>
    <lineage>
        <taxon>Eukaryota</taxon>
        <taxon>Metazoa</taxon>
        <taxon>Chordata</taxon>
        <taxon>Craniata</taxon>
        <taxon>Vertebrata</taxon>
        <taxon>Euteleostomi</taxon>
        <taxon>Mammalia</taxon>
        <taxon>Eutheria</taxon>
        <taxon>Laurasiatheria</taxon>
        <taxon>Artiodactyla</taxon>
        <taxon>Ruminantia</taxon>
        <taxon>Pecora</taxon>
        <taxon>Bovidae</taxon>
        <taxon>Bovinae</taxon>
        <taxon>Bos</taxon>
    </lineage>
</organism>
<gene>
    <name type="primary">RPS11</name>
</gene>
<feature type="initiator methionine" description="Removed" evidence="1">
    <location>
        <position position="1"/>
    </location>
</feature>
<feature type="chain" id="PRO_0000240296" description="Small ribosomal subunit protein uS17">
    <location>
        <begin position="2"/>
        <end position="158"/>
    </location>
</feature>
<feature type="modified residue" description="N-acetylalanine" evidence="1">
    <location>
        <position position="2"/>
    </location>
</feature>
<feature type="modified residue" description="Citrulline" evidence="2">
    <location>
        <position position="22"/>
    </location>
</feature>
<feature type="modified residue" description="N6-acetyllysine" evidence="1">
    <location>
        <position position="38"/>
    </location>
</feature>
<feature type="modified residue" description="N6-acetyllysine" evidence="1">
    <location>
        <position position="45"/>
    </location>
</feature>
<feature type="modified residue" description="N6-acetyllysine" evidence="2">
    <location>
        <position position="58"/>
    </location>
</feature>
<feature type="modified residue" description="Phosphoserine" evidence="1">
    <location>
        <position position="67"/>
    </location>
</feature>
<feature type="modified residue" description="Omega-N-methylarginine" evidence="2">
    <location>
        <position position="69"/>
    </location>
</feature>
<feature type="modified residue" description="Phosphoserine" evidence="1">
    <location>
        <position position="110"/>
    </location>
</feature>
<feature type="lipid moiety-binding region" description="S-palmitoyl cysteine" evidence="1">
    <location>
        <position position="60"/>
    </location>
</feature>
<feature type="sequence conflict" description="In Ref. 1; AAW82130." evidence="3" ref="1">
    <original>M</original>
    <variation>V</variation>
    <location>
        <position position="80"/>
    </location>
</feature>
<protein>
    <recommendedName>
        <fullName evidence="3">Small ribosomal subunit protein uS17</fullName>
    </recommendedName>
    <alternativeName>
        <fullName>40S ribosomal protein S11</fullName>
    </alternativeName>
</protein>
<name>RS11_BOVIN</name>
<reference key="1">
    <citation type="submission" date="2005-01" db="EMBL/GenBank/DDBJ databases">
        <title>Analysis of sequences obtained from constructed full-length bovine cDNA libraries.</title>
        <authorList>
            <person name="Yu J."/>
            <person name="Meng Y."/>
            <person name="Wang Z."/>
            <person name="Hansen C."/>
            <person name="Li C."/>
            <person name="Moore S.S."/>
        </authorList>
    </citation>
    <scope>NUCLEOTIDE SEQUENCE [LARGE SCALE MRNA]</scope>
    <source>
        <tissue>Lymphoid epithelium</tissue>
    </source>
</reference>
<reference key="2">
    <citation type="submission" date="2005-08" db="EMBL/GenBank/DDBJ databases">
        <authorList>
            <consortium name="NIH - Mammalian Gene Collection (MGC) project"/>
        </authorList>
    </citation>
    <scope>NUCLEOTIDE SEQUENCE [LARGE SCALE MRNA]</scope>
    <source>
        <strain>Crossbred X Angus</strain>
        <tissue>Ileum</tissue>
    </source>
</reference>
<keyword id="KW-0007">Acetylation</keyword>
<keyword id="KW-0164">Citrullination</keyword>
<keyword id="KW-0963">Cytoplasm</keyword>
<keyword id="KW-0449">Lipoprotein</keyword>
<keyword id="KW-0488">Methylation</keyword>
<keyword id="KW-0539">Nucleus</keyword>
<keyword id="KW-0564">Palmitate</keyword>
<keyword id="KW-0597">Phosphoprotein</keyword>
<keyword id="KW-1185">Reference proteome</keyword>
<keyword id="KW-0687">Ribonucleoprotein</keyword>
<keyword id="KW-0689">Ribosomal protein</keyword>
<keyword id="KW-0694">RNA-binding</keyword>
<keyword id="KW-0699">rRNA-binding</keyword>
<evidence type="ECO:0000250" key="1">
    <source>
        <dbReference type="UniProtKB" id="P62280"/>
    </source>
</evidence>
<evidence type="ECO:0000250" key="2">
    <source>
        <dbReference type="UniProtKB" id="P62281"/>
    </source>
</evidence>
<evidence type="ECO:0000305" key="3"/>
<dbReference type="EMBL" id="AY911366">
    <property type="protein sequence ID" value="AAW82130.1"/>
    <property type="molecule type" value="mRNA"/>
</dbReference>
<dbReference type="EMBL" id="BC102249">
    <property type="protein sequence ID" value="AAI02250.1"/>
    <property type="molecule type" value="mRNA"/>
</dbReference>
<dbReference type="RefSeq" id="NP_001019739.1">
    <property type="nucleotide sequence ID" value="NM_001024568.2"/>
</dbReference>
<dbReference type="SMR" id="Q3T0V4"/>
<dbReference type="FunCoup" id="Q3T0V4">
    <property type="interactions" value="2359"/>
</dbReference>
<dbReference type="STRING" id="9913.ENSBTAP00000018491"/>
<dbReference type="PaxDb" id="9913-ENSBTAP00000018491"/>
<dbReference type="PeptideAtlas" id="Q3T0V4"/>
<dbReference type="GeneID" id="539196"/>
<dbReference type="KEGG" id="bta:539196"/>
<dbReference type="CTD" id="6205"/>
<dbReference type="VEuPathDB" id="HostDB:ENSBTAG00000013924"/>
<dbReference type="eggNOG" id="KOG1728">
    <property type="taxonomic scope" value="Eukaryota"/>
</dbReference>
<dbReference type="HOGENOM" id="CLU_073626_0_2_1"/>
<dbReference type="InParanoid" id="Q3T0V4"/>
<dbReference type="OMA" id="DYEKCPF"/>
<dbReference type="OrthoDB" id="10254436at2759"/>
<dbReference type="TreeFam" id="TF300126"/>
<dbReference type="Reactome" id="R-BTA-156827">
    <property type="pathway name" value="L13a-mediated translational silencing of Ceruloplasmin expression"/>
</dbReference>
<dbReference type="Reactome" id="R-BTA-1799339">
    <property type="pathway name" value="SRP-dependent cotranslational protein targeting to membrane"/>
</dbReference>
<dbReference type="Reactome" id="R-BTA-6791226">
    <property type="pathway name" value="Major pathway of rRNA processing in the nucleolus and cytosol"/>
</dbReference>
<dbReference type="Reactome" id="R-BTA-72649">
    <property type="pathway name" value="Translation initiation complex formation"/>
</dbReference>
<dbReference type="Reactome" id="R-BTA-72689">
    <property type="pathway name" value="Formation of a pool of free 40S subunits"/>
</dbReference>
<dbReference type="Reactome" id="R-BTA-72695">
    <property type="pathway name" value="Formation of the ternary complex, and subsequently, the 43S complex"/>
</dbReference>
<dbReference type="Reactome" id="R-BTA-72702">
    <property type="pathway name" value="Ribosomal scanning and start codon recognition"/>
</dbReference>
<dbReference type="Reactome" id="R-BTA-72706">
    <property type="pathway name" value="GTP hydrolysis and joining of the 60S ribosomal subunit"/>
</dbReference>
<dbReference type="Reactome" id="R-BTA-975956">
    <property type="pathway name" value="Nonsense Mediated Decay (NMD) independent of the Exon Junction Complex (EJC)"/>
</dbReference>
<dbReference type="Reactome" id="R-BTA-975957">
    <property type="pathway name" value="Nonsense Mediated Decay (NMD) enhanced by the Exon Junction Complex (EJC)"/>
</dbReference>
<dbReference type="CD-CODE" id="D7FE2080">
    <property type="entry name" value="Nucleolus"/>
</dbReference>
<dbReference type="Proteomes" id="UP000009136">
    <property type="component" value="Chromosome 18"/>
</dbReference>
<dbReference type="Bgee" id="ENSBTAG00000013924">
    <property type="expression patterns" value="Expressed in blood and 105 other cell types or tissues"/>
</dbReference>
<dbReference type="GO" id="GO:0022627">
    <property type="term" value="C:cytosolic small ribosomal subunit"/>
    <property type="evidence" value="ECO:0000250"/>
    <property type="project" value="AgBase"/>
</dbReference>
<dbReference type="GO" id="GO:0005730">
    <property type="term" value="C:nucleolus"/>
    <property type="evidence" value="ECO:0007669"/>
    <property type="project" value="UniProtKB-SubCell"/>
</dbReference>
<dbReference type="GO" id="GO:0032040">
    <property type="term" value="C:small-subunit processome"/>
    <property type="evidence" value="ECO:0000250"/>
    <property type="project" value="UniProtKB"/>
</dbReference>
<dbReference type="GO" id="GO:0019843">
    <property type="term" value="F:rRNA binding"/>
    <property type="evidence" value="ECO:0007669"/>
    <property type="project" value="UniProtKB-KW"/>
</dbReference>
<dbReference type="GO" id="GO:0003735">
    <property type="term" value="F:structural constituent of ribosome"/>
    <property type="evidence" value="ECO:0000318"/>
    <property type="project" value="GO_Central"/>
</dbReference>
<dbReference type="GO" id="GO:0042274">
    <property type="term" value="P:ribosomal small subunit biogenesis"/>
    <property type="evidence" value="ECO:0000250"/>
    <property type="project" value="UniProtKB"/>
</dbReference>
<dbReference type="GO" id="GO:0006412">
    <property type="term" value="P:translation"/>
    <property type="evidence" value="ECO:0007669"/>
    <property type="project" value="InterPro"/>
</dbReference>
<dbReference type="CDD" id="cd00364">
    <property type="entry name" value="Ribosomal_uS17"/>
    <property type="match status" value="1"/>
</dbReference>
<dbReference type="FunFam" id="2.40.50.1000:FF:000008">
    <property type="entry name" value="40S ribosomal protein S11"/>
    <property type="match status" value="1"/>
</dbReference>
<dbReference type="Gene3D" id="2.40.50.1000">
    <property type="match status" value="1"/>
</dbReference>
<dbReference type="InterPro" id="IPR012340">
    <property type="entry name" value="NA-bd_OB-fold"/>
</dbReference>
<dbReference type="InterPro" id="IPR000266">
    <property type="entry name" value="Ribosomal_uS17"/>
</dbReference>
<dbReference type="InterPro" id="IPR028333">
    <property type="entry name" value="Ribosomal_uS17_arc/euk"/>
</dbReference>
<dbReference type="InterPro" id="IPR019979">
    <property type="entry name" value="Ribosomal_uS17_CS"/>
</dbReference>
<dbReference type="InterPro" id="IPR032440">
    <property type="entry name" value="Ribosomal_uS17_N"/>
</dbReference>
<dbReference type="NCBIfam" id="NF006345">
    <property type="entry name" value="PRK08572.1"/>
    <property type="match status" value="1"/>
</dbReference>
<dbReference type="NCBIfam" id="TIGR03630">
    <property type="entry name" value="uS17_arch"/>
    <property type="match status" value="1"/>
</dbReference>
<dbReference type="PANTHER" id="PTHR10744">
    <property type="entry name" value="40S RIBOSOMAL PROTEIN S11 FAMILY MEMBER"/>
    <property type="match status" value="1"/>
</dbReference>
<dbReference type="PANTHER" id="PTHR10744:SF52">
    <property type="entry name" value="SMALL RIBOSOMAL SUBUNIT PROTEIN US17"/>
    <property type="match status" value="1"/>
</dbReference>
<dbReference type="Pfam" id="PF00366">
    <property type="entry name" value="Ribosomal_S17"/>
    <property type="match status" value="1"/>
</dbReference>
<dbReference type="Pfam" id="PF16205">
    <property type="entry name" value="Ribosomal_S17_N"/>
    <property type="match status" value="1"/>
</dbReference>
<dbReference type="PRINTS" id="PR00973">
    <property type="entry name" value="RIBOSOMALS17"/>
</dbReference>
<dbReference type="SUPFAM" id="SSF50249">
    <property type="entry name" value="Nucleic acid-binding proteins"/>
    <property type="match status" value="1"/>
</dbReference>
<dbReference type="PROSITE" id="PS00056">
    <property type="entry name" value="RIBOSOMAL_S17"/>
    <property type="match status" value="1"/>
</dbReference>
<proteinExistence type="evidence at transcript level"/>
<comment type="function">
    <text evidence="1">Component of the small ribosomal subunit. The ribosome is a large ribonucleoprotein complex responsible for the synthesis of proteins in the cell. Part of the small subunit (SSU) processome, first precursor of the small eukaryotic ribosomal subunit. During the assembly of the SSU processome in the nucleolus, many ribosome biogenesis factors, an RNA chaperone and ribosomal proteins associate with the nascent pre-rRNA and work in concert to generate RNA folding, modifications, rearrangements and cleavage as well as targeted degradation of pre-ribosomal RNA by the RNA exosome.</text>
</comment>
<comment type="subunit">
    <text evidence="1">Component of the small ribosomal subunit. Part of the small subunit (SSU) processome, composed of more than 70 proteins and the RNA chaperone small nucleolar RNA (snoRNA) U3.</text>
</comment>
<comment type="subcellular location">
    <subcellularLocation>
        <location evidence="1">Cytoplasm</location>
    </subcellularLocation>
    <subcellularLocation>
        <location evidence="1">Nucleus</location>
        <location evidence="1">Nucleolus</location>
    </subcellularLocation>
</comment>
<comment type="PTM">
    <text evidence="2">Citrullinated by PADI4.</text>
</comment>
<comment type="similarity">
    <text evidence="3">Belongs to the universal ribosomal protein uS17 family.</text>
</comment>